<gene>
    <name evidence="1" type="primary">rbfA</name>
    <name type="ordered locus">Helmi_22230</name>
    <name type="ORF">HM1_2315</name>
</gene>
<accession>B0THR5</accession>
<dbReference type="EMBL" id="CP000930">
    <property type="protein sequence ID" value="ABZ84848.1"/>
    <property type="molecule type" value="Genomic_DNA"/>
</dbReference>
<dbReference type="RefSeq" id="WP_012283346.1">
    <property type="nucleotide sequence ID" value="NC_010337.2"/>
</dbReference>
<dbReference type="SMR" id="B0THR5"/>
<dbReference type="STRING" id="498761.HM1_2315"/>
<dbReference type="KEGG" id="hmo:HM1_2315"/>
<dbReference type="eggNOG" id="COG0858">
    <property type="taxonomic scope" value="Bacteria"/>
</dbReference>
<dbReference type="HOGENOM" id="CLU_089475_6_3_9"/>
<dbReference type="OrthoDB" id="307788at2"/>
<dbReference type="Proteomes" id="UP000008550">
    <property type="component" value="Chromosome"/>
</dbReference>
<dbReference type="GO" id="GO:0005829">
    <property type="term" value="C:cytosol"/>
    <property type="evidence" value="ECO:0007669"/>
    <property type="project" value="TreeGrafter"/>
</dbReference>
<dbReference type="GO" id="GO:0043024">
    <property type="term" value="F:ribosomal small subunit binding"/>
    <property type="evidence" value="ECO:0007669"/>
    <property type="project" value="TreeGrafter"/>
</dbReference>
<dbReference type="GO" id="GO:0030490">
    <property type="term" value="P:maturation of SSU-rRNA"/>
    <property type="evidence" value="ECO:0007669"/>
    <property type="project" value="UniProtKB-UniRule"/>
</dbReference>
<dbReference type="Gene3D" id="3.30.300.20">
    <property type="match status" value="1"/>
</dbReference>
<dbReference type="HAMAP" id="MF_00003">
    <property type="entry name" value="RbfA"/>
    <property type="match status" value="1"/>
</dbReference>
<dbReference type="InterPro" id="IPR015946">
    <property type="entry name" value="KH_dom-like_a/b"/>
</dbReference>
<dbReference type="InterPro" id="IPR000238">
    <property type="entry name" value="RbfA"/>
</dbReference>
<dbReference type="InterPro" id="IPR023799">
    <property type="entry name" value="RbfA_dom_sf"/>
</dbReference>
<dbReference type="InterPro" id="IPR020053">
    <property type="entry name" value="Ribosome-bd_factorA_CS"/>
</dbReference>
<dbReference type="NCBIfam" id="TIGR00082">
    <property type="entry name" value="rbfA"/>
    <property type="match status" value="1"/>
</dbReference>
<dbReference type="PANTHER" id="PTHR33515">
    <property type="entry name" value="RIBOSOME-BINDING FACTOR A, CHLOROPLASTIC-RELATED"/>
    <property type="match status" value="1"/>
</dbReference>
<dbReference type="PANTHER" id="PTHR33515:SF1">
    <property type="entry name" value="RIBOSOME-BINDING FACTOR A, CHLOROPLASTIC-RELATED"/>
    <property type="match status" value="1"/>
</dbReference>
<dbReference type="Pfam" id="PF02033">
    <property type="entry name" value="RBFA"/>
    <property type="match status" value="1"/>
</dbReference>
<dbReference type="SUPFAM" id="SSF89919">
    <property type="entry name" value="Ribosome-binding factor A, RbfA"/>
    <property type="match status" value="1"/>
</dbReference>
<dbReference type="PROSITE" id="PS01319">
    <property type="entry name" value="RBFA"/>
    <property type="match status" value="1"/>
</dbReference>
<proteinExistence type="inferred from homology"/>
<name>RBFA_HELMI</name>
<protein>
    <recommendedName>
        <fullName evidence="1">Ribosome-binding factor A</fullName>
    </recommendedName>
</protein>
<keyword id="KW-0963">Cytoplasm</keyword>
<keyword id="KW-1185">Reference proteome</keyword>
<keyword id="KW-0690">Ribosome biogenesis</keyword>
<organism>
    <name type="scientific">Heliobacterium modesticaldum (strain ATCC 51547 / Ice1)</name>
    <dbReference type="NCBI Taxonomy" id="498761"/>
    <lineage>
        <taxon>Bacteria</taxon>
        <taxon>Bacillati</taxon>
        <taxon>Bacillota</taxon>
        <taxon>Clostridia</taxon>
        <taxon>Eubacteriales</taxon>
        <taxon>Heliobacteriaceae</taxon>
        <taxon>Heliomicrobium</taxon>
    </lineage>
</organism>
<reference key="1">
    <citation type="journal article" date="2008" name="J. Bacteriol.">
        <title>The genome of Heliobacterium modesticaldum, a phototrophic representative of the Firmicutes containing the simplest photosynthetic apparatus.</title>
        <authorList>
            <person name="Sattley W.M."/>
            <person name="Madigan M.T."/>
            <person name="Swingley W.D."/>
            <person name="Cheung P.C."/>
            <person name="Clocksin K.M."/>
            <person name="Conrad A.L."/>
            <person name="Dejesa L.C."/>
            <person name="Honchak B.M."/>
            <person name="Jung D.O."/>
            <person name="Karbach L.E."/>
            <person name="Kurdoglu A."/>
            <person name="Lahiri S."/>
            <person name="Mastrian S.D."/>
            <person name="Page L.E."/>
            <person name="Taylor H.L."/>
            <person name="Wang Z.T."/>
            <person name="Raymond J."/>
            <person name="Chen M."/>
            <person name="Blankenship R.E."/>
            <person name="Touchman J.W."/>
        </authorList>
    </citation>
    <scope>NUCLEOTIDE SEQUENCE [LARGE SCALE GENOMIC DNA]</scope>
    <source>
        <strain>ATCC 51547 / Ice1</strain>
    </source>
</reference>
<sequence length="121" mass="13643">MAGHRMARMAEEIKRELARLLRDEMKDPRLGFVSITAVEVSGDGRHAKVYVSVMGDESARDNSQAALKQATGFLRTELSKSLRVRYVPELVFLSDLSIERGTRIARLLTEMENHDDAEAPR</sequence>
<evidence type="ECO:0000255" key="1">
    <source>
        <dbReference type="HAMAP-Rule" id="MF_00003"/>
    </source>
</evidence>
<feature type="chain" id="PRO_1000088892" description="Ribosome-binding factor A">
    <location>
        <begin position="1"/>
        <end position="121"/>
    </location>
</feature>
<comment type="function">
    <text evidence="1">One of several proteins that assist in the late maturation steps of the functional core of the 30S ribosomal subunit. Associates with free 30S ribosomal subunits (but not with 30S subunits that are part of 70S ribosomes or polysomes). Required for efficient processing of 16S rRNA. May interact with the 5'-terminal helix region of 16S rRNA.</text>
</comment>
<comment type="subunit">
    <text evidence="1">Monomer. Binds 30S ribosomal subunits, but not 50S ribosomal subunits or 70S ribosomes.</text>
</comment>
<comment type="subcellular location">
    <subcellularLocation>
        <location evidence="1">Cytoplasm</location>
    </subcellularLocation>
</comment>
<comment type="similarity">
    <text evidence="1">Belongs to the RbfA family.</text>
</comment>